<keyword id="KW-0687">Ribonucleoprotein</keyword>
<keyword id="KW-0689">Ribosomal protein</keyword>
<keyword id="KW-0694">RNA-binding</keyword>
<keyword id="KW-0699">rRNA-binding</keyword>
<keyword id="KW-0820">tRNA-binding</keyword>
<sequence>MARISGIDLPSNKQLKIALTSIYGIGRTRALEVCNKSSISPSKIAKDLDNDEVNRLRKVIESDYVVEGKLRSEVAMSIKRLMDIACYRGVRHRKGLPLRGQRTKTNARTRKGKRKTVANKKIASK</sequence>
<comment type="function">
    <text evidence="1">Located at the top of the head of the 30S subunit, it contacts several helices of the 16S rRNA. In the 70S ribosome it contacts the 23S rRNA (bridge B1a) and protein L5 of the 50S subunit (bridge B1b), connecting the 2 subunits; these bridges are implicated in subunit movement. Contacts the tRNAs in the A and P-sites.</text>
</comment>
<comment type="subunit">
    <text evidence="1">Part of the 30S ribosomal subunit. Forms a loose heterodimer with protein S19. Forms two bridges to the 50S subunit in the 70S ribosome.</text>
</comment>
<comment type="similarity">
    <text evidence="1">Belongs to the universal ribosomal protein uS13 family.</text>
</comment>
<dbReference type="EMBL" id="CP000013">
    <property type="protein sequence ID" value="AAU07351.1"/>
    <property type="molecule type" value="Genomic_DNA"/>
</dbReference>
<dbReference type="RefSeq" id="WP_004791369.1">
    <property type="nucleotide sequence ID" value="NZ_CP028872.1"/>
</dbReference>
<dbReference type="SMR" id="Q661C0"/>
<dbReference type="GeneID" id="83865975"/>
<dbReference type="KEGG" id="bga:BG0512"/>
<dbReference type="eggNOG" id="COG0099">
    <property type="taxonomic scope" value="Bacteria"/>
</dbReference>
<dbReference type="HOGENOM" id="CLU_103849_1_2_12"/>
<dbReference type="OrthoDB" id="9803610at2"/>
<dbReference type="Proteomes" id="UP000002276">
    <property type="component" value="Chromosome"/>
</dbReference>
<dbReference type="GO" id="GO:0005829">
    <property type="term" value="C:cytosol"/>
    <property type="evidence" value="ECO:0007669"/>
    <property type="project" value="TreeGrafter"/>
</dbReference>
<dbReference type="GO" id="GO:0015935">
    <property type="term" value="C:small ribosomal subunit"/>
    <property type="evidence" value="ECO:0007669"/>
    <property type="project" value="TreeGrafter"/>
</dbReference>
<dbReference type="GO" id="GO:0019843">
    <property type="term" value="F:rRNA binding"/>
    <property type="evidence" value="ECO:0007669"/>
    <property type="project" value="UniProtKB-UniRule"/>
</dbReference>
<dbReference type="GO" id="GO:0003735">
    <property type="term" value="F:structural constituent of ribosome"/>
    <property type="evidence" value="ECO:0007669"/>
    <property type="project" value="InterPro"/>
</dbReference>
<dbReference type="GO" id="GO:0000049">
    <property type="term" value="F:tRNA binding"/>
    <property type="evidence" value="ECO:0007669"/>
    <property type="project" value="UniProtKB-UniRule"/>
</dbReference>
<dbReference type="GO" id="GO:0006412">
    <property type="term" value="P:translation"/>
    <property type="evidence" value="ECO:0007669"/>
    <property type="project" value="UniProtKB-UniRule"/>
</dbReference>
<dbReference type="FunFam" id="1.10.8.50:FF:000001">
    <property type="entry name" value="30S ribosomal protein S13"/>
    <property type="match status" value="1"/>
</dbReference>
<dbReference type="FunFam" id="4.10.910.10:FF:000001">
    <property type="entry name" value="30S ribosomal protein S13"/>
    <property type="match status" value="1"/>
</dbReference>
<dbReference type="Gene3D" id="1.10.8.50">
    <property type="match status" value="1"/>
</dbReference>
<dbReference type="Gene3D" id="4.10.910.10">
    <property type="entry name" value="30s ribosomal protein s13, domain 2"/>
    <property type="match status" value="1"/>
</dbReference>
<dbReference type="HAMAP" id="MF_01315">
    <property type="entry name" value="Ribosomal_uS13"/>
    <property type="match status" value="1"/>
</dbReference>
<dbReference type="InterPro" id="IPR027437">
    <property type="entry name" value="Rbsml_uS13_C"/>
</dbReference>
<dbReference type="InterPro" id="IPR001892">
    <property type="entry name" value="Ribosomal_uS13"/>
</dbReference>
<dbReference type="InterPro" id="IPR010979">
    <property type="entry name" value="Ribosomal_uS13-like_H2TH"/>
</dbReference>
<dbReference type="InterPro" id="IPR019980">
    <property type="entry name" value="Ribosomal_uS13_bac-type"/>
</dbReference>
<dbReference type="InterPro" id="IPR018269">
    <property type="entry name" value="Ribosomal_uS13_CS"/>
</dbReference>
<dbReference type="NCBIfam" id="TIGR03631">
    <property type="entry name" value="uS13_bact"/>
    <property type="match status" value="1"/>
</dbReference>
<dbReference type="PANTHER" id="PTHR10871">
    <property type="entry name" value="30S RIBOSOMAL PROTEIN S13/40S RIBOSOMAL PROTEIN S18"/>
    <property type="match status" value="1"/>
</dbReference>
<dbReference type="PANTHER" id="PTHR10871:SF1">
    <property type="entry name" value="SMALL RIBOSOMAL SUBUNIT PROTEIN US13M"/>
    <property type="match status" value="1"/>
</dbReference>
<dbReference type="Pfam" id="PF00416">
    <property type="entry name" value="Ribosomal_S13"/>
    <property type="match status" value="1"/>
</dbReference>
<dbReference type="PIRSF" id="PIRSF002134">
    <property type="entry name" value="Ribosomal_S13"/>
    <property type="match status" value="1"/>
</dbReference>
<dbReference type="SUPFAM" id="SSF46946">
    <property type="entry name" value="S13-like H2TH domain"/>
    <property type="match status" value="1"/>
</dbReference>
<dbReference type="PROSITE" id="PS00646">
    <property type="entry name" value="RIBOSOMAL_S13_1"/>
    <property type="match status" value="1"/>
</dbReference>
<dbReference type="PROSITE" id="PS50159">
    <property type="entry name" value="RIBOSOMAL_S13_2"/>
    <property type="match status" value="1"/>
</dbReference>
<protein>
    <recommendedName>
        <fullName evidence="1">Small ribosomal subunit protein uS13</fullName>
    </recommendedName>
    <alternativeName>
        <fullName evidence="3">30S ribosomal protein S13</fullName>
    </alternativeName>
</protein>
<name>RS13_BORGP</name>
<proteinExistence type="inferred from homology"/>
<reference key="1">
    <citation type="journal article" date="2004" name="Nucleic Acids Res.">
        <title>Comparative analysis of the Borrelia garinii genome.</title>
        <authorList>
            <person name="Gloeckner G."/>
            <person name="Lehmann R."/>
            <person name="Romualdi A."/>
            <person name="Pradella S."/>
            <person name="Schulte-Spechtel U."/>
            <person name="Schilhabel M."/>
            <person name="Wilske B."/>
            <person name="Suehnel J."/>
            <person name="Platzer M."/>
        </authorList>
    </citation>
    <scope>NUCLEOTIDE SEQUENCE [LARGE SCALE GENOMIC DNA]</scope>
    <source>
        <strain>ATCC BAA-2496 / DSM 23469 / PBi</strain>
    </source>
</reference>
<gene>
    <name evidence="1" type="primary">rpsM</name>
    <name type="ordered locus">BG0512</name>
</gene>
<feature type="chain" id="PRO_0000230481" description="Small ribosomal subunit protein uS13">
    <location>
        <begin position="1"/>
        <end position="125"/>
    </location>
</feature>
<feature type="region of interest" description="Disordered" evidence="2">
    <location>
        <begin position="95"/>
        <end position="125"/>
    </location>
</feature>
<accession>Q661C0</accession>
<evidence type="ECO:0000255" key="1">
    <source>
        <dbReference type="HAMAP-Rule" id="MF_01315"/>
    </source>
</evidence>
<evidence type="ECO:0000256" key="2">
    <source>
        <dbReference type="SAM" id="MobiDB-lite"/>
    </source>
</evidence>
<evidence type="ECO:0000305" key="3"/>
<organism>
    <name type="scientific">Borrelia garinii subsp. bavariensis (strain ATCC BAA-2496 / DSM 23469 / PBi)</name>
    <name type="common">Borreliella bavariensis</name>
    <dbReference type="NCBI Taxonomy" id="290434"/>
    <lineage>
        <taxon>Bacteria</taxon>
        <taxon>Pseudomonadati</taxon>
        <taxon>Spirochaetota</taxon>
        <taxon>Spirochaetia</taxon>
        <taxon>Spirochaetales</taxon>
        <taxon>Borreliaceae</taxon>
        <taxon>Borreliella</taxon>
    </lineage>
</organism>